<gene>
    <name type="ORF">GE13328</name>
</gene>
<name>WDR12_DROYA</name>
<comment type="function">
    <text evidence="1">Required for maturation of ribosomal RNAs and formation of the large ribosomal subunit.</text>
</comment>
<comment type="subcellular location">
    <subcellularLocation>
        <location evidence="1">Nucleus</location>
        <location evidence="1">Nucleolus</location>
    </subcellularLocation>
    <subcellularLocation>
        <location evidence="1">Nucleus</location>
        <location evidence="1">Nucleoplasm</location>
    </subcellularLocation>
</comment>
<comment type="similarity">
    <text evidence="1">Belongs to the WD repeat WDR12/YTM1 family.</text>
</comment>
<sequence>MDVENGEGQVQVHLKTKQEHYAVPDVPYAIDGTVTTVELNTFVNALLRQKDGSSDTDFDFLVFDEYLRGRLCDHLREKAISFEDAIEIEYVERFPAPEPQDCLLHDDWVSAVKASGKWILSGCYDNTLNLWTNKGKHILTISGHTAPIKAVDWISLDEETGRFVSTSQDQTAMLWQWNVGSNSVECVSVCKGHERGVDSVSVSPDGLRFATGSWDTMLKVWSAEVEDAVEGSSKRMKESGVRTPKITLQGHRESVSAVQWMDASTLLTGSWDHTLKVWDLSLEGIKTEISTNKSIFDASYSKLNRLILTASADKNLRLYDPRTNQGSVVRNTYLGHNAWVQTVMWSTTEEFLFVSGAYDNQNKLWDCRSPKAPLYDLLGHGEKVLDIDWSNPKYIVSGGVDNTVRVFKSRKALADDAETK</sequence>
<accession>B4P116</accession>
<accession>Q6XIB0</accession>
<proteinExistence type="evidence at transcript level"/>
<organism>
    <name type="scientific">Drosophila yakuba</name>
    <name type="common">Fruit fly</name>
    <dbReference type="NCBI Taxonomy" id="7245"/>
    <lineage>
        <taxon>Eukaryota</taxon>
        <taxon>Metazoa</taxon>
        <taxon>Ecdysozoa</taxon>
        <taxon>Arthropoda</taxon>
        <taxon>Hexapoda</taxon>
        <taxon>Insecta</taxon>
        <taxon>Pterygota</taxon>
        <taxon>Neoptera</taxon>
        <taxon>Endopterygota</taxon>
        <taxon>Diptera</taxon>
        <taxon>Brachycera</taxon>
        <taxon>Muscomorpha</taxon>
        <taxon>Ephydroidea</taxon>
        <taxon>Drosophilidae</taxon>
        <taxon>Drosophila</taxon>
        <taxon>Sophophora</taxon>
    </lineage>
</organism>
<evidence type="ECO:0000255" key="1">
    <source>
        <dbReference type="HAMAP-Rule" id="MF_03029"/>
    </source>
</evidence>
<dbReference type="EMBL" id="CM000157">
    <property type="protein sequence ID" value="EDW87991.1"/>
    <property type="molecule type" value="Genomic_DNA"/>
</dbReference>
<dbReference type="EMBL" id="AY231921">
    <property type="protein sequence ID" value="AAR09944.1"/>
    <property type="molecule type" value="mRNA"/>
</dbReference>
<dbReference type="SMR" id="B4P116"/>
<dbReference type="EnsemblMetazoa" id="FBtr0259846">
    <property type="protein sequence ID" value="FBpp0258338"/>
    <property type="gene ID" value="FBgn0068268"/>
</dbReference>
<dbReference type="EnsemblMetazoa" id="XM_002088243.3">
    <property type="protein sequence ID" value="XP_002088279.1"/>
    <property type="gene ID" value="LOC6527185"/>
</dbReference>
<dbReference type="GeneID" id="6527185"/>
<dbReference type="KEGG" id="dya:Dyak_GE13328"/>
<dbReference type="eggNOG" id="KOG0313">
    <property type="taxonomic scope" value="Eukaryota"/>
</dbReference>
<dbReference type="HOGENOM" id="CLU_000288_57_0_1"/>
<dbReference type="OMA" id="DHKYVEF"/>
<dbReference type="OrthoDB" id="10251381at2759"/>
<dbReference type="PhylomeDB" id="B4P116"/>
<dbReference type="Proteomes" id="UP000002282">
    <property type="component" value="Chromosome 2L"/>
</dbReference>
<dbReference type="GO" id="GO:0005654">
    <property type="term" value="C:nucleoplasm"/>
    <property type="evidence" value="ECO:0007669"/>
    <property type="project" value="UniProtKB-SubCell"/>
</dbReference>
<dbReference type="GO" id="GO:0070545">
    <property type="term" value="C:PeBoW complex"/>
    <property type="evidence" value="ECO:0000250"/>
    <property type="project" value="UniProtKB"/>
</dbReference>
<dbReference type="GO" id="GO:0030687">
    <property type="term" value="C:preribosome, large subunit precursor"/>
    <property type="evidence" value="ECO:0007669"/>
    <property type="project" value="UniProtKB-UniRule"/>
</dbReference>
<dbReference type="GO" id="GO:0043021">
    <property type="term" value="F:ribonucleoprotein complex binding"/>
    <property type="evidence" value="ECO:0007669"/>
    <property type="project" value="UniProtKB-UniRule"/>
</dbReference>
<dbReference type="GO" id="GO:0000466">
    <property type="term" value="P:maturation of 5.8S rRNA from tricistronic rRNA transcript (SSU-rRNA, 5.8S rRNA, LSU-rRNA)"/>
    <property type="evidence" value="ECO:0007669"/>
    <property type="project" value="UniProtKB-UniRule"/>
</dbReference>
<dbReference type="GO" id="GO:0000463">
    <property type="term" value="P:maturation of LSU-rRNA from tricistronic rRNA transcript (SSU-rRNA, 5.8S rRNA, LSU-rRNA)"/>
    <property type="evidence" value="ECO:0000250"/>
    <property type="project" value="UniProtKB"/>
</dbReference>
<dbReference type="CDD" id="cd00200">
    <property type="entry name" value="WD40"/>
    <property type="match status" value="1"/>
</dbReference>
<dbReference type="FunFam" id="2.130.10.10:FF:000878">
    <property type="entry name" value="Ribosome biogenesis protein WDR12 homolog"/>
    <property type="match status" value="1"/>
</dbReference>
<dbReference type="FunFam" id="2.130.10.10:FF:000989">
    <property type="entry name" value="Ribosome biogenesis protein WDR12 homolog"/>
    <property type="match status" value="1"/>
</dbReference>
<dbReference type="FunFam" id="2.130.10.10:FF:001205">
    <property type="entry name" value="Ribosome biogenesis protein WDR12 homolog"/>
    <property type="match status" value="1"/>
</dbReference>
<dbReference type="Gene3D" id="2.130.10.10">
    <property type="entry name" value="YVTN repeat-like/Quinoprotein amine dehydrogenase"/>
    <property type="match status" value="3"/>
</dbReference>
<dbReference type="HAMAP" id="MF_03029">
    <property type="entry name" value="WDR12"/>
    <property type="match status" value="1"/>
</dbReference>
<dbReference type="InterPro" id="IPR020472">
    <property type="entry name" value="G-protein_beta_WD-40_rep"/>
</dbReference>
<dbReference type="InterPro" id="IPR012972">
    <property type="entry name" value="NLE"/>
</dbReference>
<dbReference type="InterPro" id="IPR015943">
    <property type="entry name" value="WD40/YVTN_repeat-like_dom_sf"/>
</dbReference>
<dbReference type="InterPro" id="IPR019775">
    <property type="entry name" value="WD40_repeat_CS"/>
</dbReference>
<dbReference type="InterPro" id="IPR036322">
    <property type="entry name" value="WD40_repeat_dom_sf"/>
</dbReference>
<dbReference type="InterPro" id="IPR001680">
    <property type="entry name" value="WD40_rpt"/>
</dbReference>
<dbReference type="InterPro" id="IPR028599">
    <property type="entry name" value="WDR12/Ytm1"/>
</dbReference>
<dbReference type="PANTHER" id="PTHR19855:SF11">
    <property type="entry name" value="RIBOSOME BIOGENESIS PROTEIN WDR12"/>
    <property type="match status" value="1"/>
</dbReference>
<dbReference type="PANTHER" id="PTHR19855">
    <property type="entry name" value="WD40 REPEAT PROTEIN 12, 37"/>
    <property type="match status" value="1"/>
</dbReference>
<dbReference type="Pfam" id="PF08154">
    <property type="entry name" value="NLE"/>
    <property type="match status" value="1"/>
</dbReference>
<dbReference type="Pfam" id="PF00400">
    <property type="entry name" value="WD40"/>
    <property type="match status" value="7"/>
</dbReference>
<dbReference type="PRINTS" id="PR00320">
    <property type="entry name" value="GPROTEINBRPT"/>
</dbReference>
<dbReference type="SMART" id="SM00320">
    <property type="entry name" value="WD40"/>
    <property type="match status" value="7"/>
</dbReference>
<dbReference type="SUPFAM" id="SSF50978">
    <property type="entry name" value="WD40 repeat-like"/>
    <property type="match status" value="1"/>
</dbReference>
<dbReference type="PROSITE" id="PS00678">
    <property type="entry name" value="WD_REPEATS_1"/>
    <property type="match status" value="1"/>
</dbReference>
<dbReference type="PROSITE" id="PS50082">
    <property type="entry name" value="WD_REPEATS_2"/>
    <property type="match status" value="4"/>
</dbReference>
<dbReference type="PROSITE" id="PS50294">
    <property type="entry name" value="WD_REPEATS_REGION"/>
    <property type="match status" value="1"/>
</dbReference>
<protein>
    <recommendedName>
        <fullName evidence="1">Ribosome biogenesis protein WDR12 homolog</fullName>
    </recommendedName>
</protein>
<keyword id="KW-0539">Nucleus</keyword>
<keyword id="KW-0677">Repeat</keyword>
<keyword id="KW-0690">Ribosome biogenesis</keyword>
<keyword id="KW-0698">rRNA processing</keyword>
<keyword id="KW-0853">WD repeat</keyword>
<feature type="chain" id="PRO_0000369566" description="Ribosome biogenesis protein WDR12 homolog">
    <location>
        <begin position="1"/>
        <end position="420"/>
    </location>
</feature>
<feature type="repeat" description="WD 1">
    <location>
        <begin position="104"/>
        <end position="142"/>
    </location>
</feature>
<feature type="repeat" description="WD 2">
    <location>
        <begin position="143"/>
        <end position="185"/>
    </location>
</feature>
<feature type="repeat" description="WD 3">
    <location>
        <begin position="192"/>
        <end position="231"/>
    </location>
</feature>
<feature type="repeat" description="WD 4">
    <location>
        <begin position="250"/>
        <end position="288"/>
    </location>
</feature>
<feature type="repeat" description="WD 5">
    <location>
        <begin position="290"/>
        <end position="329"/>
    </location>
</feature>
<feature type="repeat" description="WD 6">
    <location>
        <begin position="335"/>
        <end position="375"/>
    </location>
</feature>
<feature type="repeat" description="WD 7">
    <location>
        <begin position="379"/>
        <end position="417"/>
    </location>
</feature>
<feature type="region of interest" description="Ubiquitin-like (UBL) domain" evidence="1">
    <location>
        <begin position="10"/>
        <end position="92"/>
    </location>
</feature>
<reference key="1">
    <citation type="journal article" date="2007" name="Nature">
        <title>Evolution of genes and genomes on the Drosophila phylogeny.</title>
        <authorList>
            <consortium name="Drosophila 12 genomes consortium"/>
        </authorList>
    </citation>
    <scope>NUCLEOTIDE SEQUENCE [LARGE SCALE GENOMIC DNA]</scope>
    <source>
        <strain>Tai18E2 / Tucson 14021-0261.01</strain>
    </source>
</reference>
<reference key="2">
    <citation type="journal article" date="2003" name="Genome Res.">
        <title>An evolutionary analysis of orphan genes in Drosophila.</title>
        <authorList>
            <person name="Domazet-Loso T."/>
            <person name="Tautz D."/>
        </authorList>
    </citation>
    <scope>NUCLEOTIDE SEQUENCE [MRNA] OF 229-420</scope>
</reference>